<accession>Q0T3A2</accession>
<reference key="1">
    <citation type="journal article" date="2006" name="BMC Genomics">
        <title>Complete genome sequence of Shigella flexneri 5b and comparison with Shigella flexneri 2a.</title>
        <authorList>
            <person name="Nie H."/>
            <person name="Yang F."/>
            <person name="Zhang X."/>
            <person name="Yang J."/>
            <person name="Chen L."/>
            <person name="Wang J."/>
            <person name="Xiong Z."/>
            <person name="Peng J."/>
            <person name="Sun L."/>
            <person name="Dong J."/>
            <person name="Xue Y."/>
            <person name="Xu X."/>
            <person name="Chen S."/>
            <person name="Yao Z."/>
            <person name="Shen Y."/>
            <person name="Jin Q."/>
        </authorList>
    </citation>
    <scope>NUCLEOTIDE SEQUENCE [LARGE SCALE GENOMIC DNA]</scope>
    <source>
        <strain>8401</strain>
    </source>
</reference>
<dbReference type="EC" id="4.3.2.10" evidence="1"/>
<dbReference type="EMBL" id="CP000266">
    <property type="protein sequence ID" value="ABF04213.1"/>
    <property type="molecule type" value="Genomic_DNA"/>
</dbReference>
<dbReference type="RefSeq" id="WP_000880171.1">
    <property type="nucleotide sequence ID" value="NC_008258.1"/>
</dbReference>
<dbReference type="SMR" id="Q0T3A2"/>
<dbReference type="KEGG" id="sfv:SFV_2085"/>
<dbReference type="HOGENOM" id="CLU_048577_4_0_6"/>
<dbReference type="UniPathway" id="UPA00031">
    <property type="reaction ID" value="UER00010"/>
</dbReference>
<dbReference type="Proteomes" id="UP000000659">
    <property type="component" value="Chromosome"/>
</dbReference>
<dbReference type="GO" id="GO:0005737">
    <property type="term" value="C:cytoplasm"/>
    <property type="evidence" value="ECO:0007669"/>
    <property type="project" value="UniProtKB-SubCell"/>
</dbReference>
<dbReference type="GO" id="GO:0000107">
    <property type="term" value="F:imidazoleglycerol-phosphate synthase activity"/>
    <property type="evidence" value="ECO:0007669"/>
    <property type="project" value="UniProtKB-UniRule"/>
</dbReference>
<dbReference type="GO" id="GO:0016829">
    <property type="term" value="F:lyase activity"/>
    <property type="evidence" value="ECO:0007669"/>
    <property type="project" value="UniProtKB-KW"/>
</dbReference>
<dbReference type="GO" id="GO:0000105">
    <property type="term" value="P:L-histidine biosynthetic process"/>
    <property type="evidence" value="ECO:0007669"/>
    <property type="project" value="UniProtKB-UniRule"/>
</dbReference>
<dbReference type="CDD" id="cd04731">
    <property type="entry name" value="HisF"/>
    <property type="match status" value="1"/>
</dbReference>
<dbReference type="FunFam" id="3.20.20.70:FF:000006">
    <property type="entry name" value="Imidazole glycerol phosphate synthase subunit HisF"/>
    <property type="match status" value="1"/>
</dbReference>
<dbReference type="Gene3D" id="3.20.20.70">
    <property type="entry name" value="Aldolase class I"/>
    <property type="match status" value="1"/>
</dbReference>
<dbReference type="HAMAP" id="MF_01013">
    <property type="entry name" value="HisF"/>
    <property type="match status" value="1"/>
</dbReference>
<dbReference type="InterPro" id="IPR013785">
    <property type="entry name" value="Aldolase_TIM"/>
</dbReference>
<dbReference type="InterPro" id="IPR006062">
    <property type="entry name" value="His_biosynth"/>
</dbReference>
<dbReference type="InterPro" id="IPR004651">
    <property type="entry name" value="HisF"/>
</dbReference>
<dbReference type="InterPro" id="IPR050064">
    <property type="entry name" value="IGPS_HisA/HisF"/>
</dbReference>
<dbReference type="InterPro" id="IPR011060">
    <property type="entry name" value="RibuloseP-bd_barrel"/>
</dbReference>
<dbReference type="NCBIfam" id="TIGR00735">
    <property type="entry name" value="hisF"/>
    <property type="match status" value="1"/>
</dbReference>
<dbReference type="PANTHER" id="PTHR21235:SF2">
    <property type="entry name" value="IMIDAZOLE GLYCEROL PHOSPHATE SYNTHASE HISHF"/>
    <property type="match status" value="1"/>
</dbReference>
<dbReference type="PANTHER" id="PTHR21235">
    <property type="entry name" value="IMIDAZOLE GLYCEROL PHOSPHATE SYNTHASE SUBUNIT HISF/H IGP SYNTHASE SUBUNIT HISF/H"/>
    <property type="match status" value="1"/>
</dbReference>
<dbReference type="Pfam" id="PF00977">
    <property type="entry name" value="His_biosynth"/>
    <property type="match status" value="1"/>
</dbReference>
<dbReference type="SUPFAM" id="SSF51366">
    <property type="entry name" value="Ribulose-phoshate binding barrel"/>
    <property type="match status" value="1"/>
</dbReference>
<protein>
    <recommendedName>
        <fullName evidence="1">Imidazole glycerol phosphate synthase subunit HisF</fullName>
        <ecNumber evidence="1">4.3.2.10</ecNumber>
    </recommendedName>
    <alternativeName>
        <fullName evidence="1">IGP synthase cyclase subunit</fullName>
    </alternativeName>
    <alternativeName>
        <fullName evidence="1">IGP synthase subunit HisF</fullName>
    </alternativeName>
    <alternativeName>
        <fullName evidence="1">ImGP synthase subunit HisF</fullName>
        <shortName evidence="1">IGPS subunit HisF</shortName>
    </alternativeName>
</protein>
<evidence type="ECO:0000255" key="1">
    <source>
        <dbReference type="HAMAP-Rule" id="MF_01013"/>
    </source>
</evidence>
<gene>
    <name evidence="1" type="primary">hisF</name>
    <name type="ordered locus">SFV_2085</name>
</gene>
<proteinExistence type="inferred from homology"/>
<feature type="chain" id="PRO_1000063152" description="Imidazole glycerol phosphate synthase subunit HisF">
    <location>
        <begin position="1"/>
        <end position="258"/>
    </location>
</feature>
<feature type="active site" evidence="1">
    <location>
        <position position="11"/>
    </location>
</feature>
<feature type="active site" evidence="1">
    <location>
        <position position="130"/>
    </location>
</feature>
<keyword id="KW-0028">Amino-acid biosynthesis</keyword>
<keyword id="KW-0963">Cytoplasm</keyword>
<keyword id="KW-0368">Histidine biosynthesis</keyword>
<keyword id="KW-0456">Lyase</keyword>
<organism>
    <name type="scientific">Shigella flexneri serotype 5b (strain 8401)</name>
    <dbReference type="NCBI Taxonomy" id="373384"/>
    <lineage>
        <taxon>Bacteria</taxon>
        <taxon>Pseudomonadati</taxon>
        <taxon>Pseudomonadota</taxon>
        <taxon>Gammaproteobacteria</taxon>
        <taxon>Enterobacterales</taxon>
        <taxon>Enterobacteriaceae</taxon>
        <taxon>Shigella</taxon>
    </lineage>
</organism>
<name>HIS6_SHIF8</name>
<sequence length="258" mass="28401">MLAKRIIPCLDVRDGQVVKGVQFRNHEIIGDIVPLAKRYAEEGADELVFYDITASSDGRVVDKSWVSRVAEVIDIPFCVAGGIKSLEDAAKILSFGADKISINSPALADPTLITRLADRFGVQCIVVGIDTWYDAETGKYHVNQYTGDESRTRVTQWETLDWVEEVQKRGAGEIVLNMMNQDGVCNGYDLKQLKKVREVCHVPLIASGGAGTMEHFLEAFRDADVDGALAASVFHKQIINIGELKAYLATQGVEIRIC</sequence>
<comment type="function">
    <text evidence="1">IGPS catalyzes the conversion of PRFAR and glutamine to IGP, AICAR and glutamate. The HisF subunit catalyzes the cyclization activity that produces IGP and AICAR from PRFAR using the ammonia provided by the HisH subunit.</text>
</comment>
<comment type="catalytic activity">
    <reaction evidence="1">
        <text>5-[(5-phospho-1-deoxy-D-ribulos-1-ylimino)methylamino]-1-(5-phospho-beta-D-ribosyl)imidazole-4-carboxamide + L-glutamine = D-erythro-1-(imidazol-4-yl)glycerol 3-phosphate + 5-amino-1-(5-phospho-beta-D-ribosyl)imidazole-4-carboxamide + L-glutamate + H(+)</text>
        <dbReference type="Rhea" id="RHEA:24793"/>
        <dbReference type="ChEBI" id="CHEBI:15378"/>
        <dbReference type="ChEBI" id="CHEBI:29985"/>
        <dbReference type="ChEBI" id="CHEBI:58278"/>
        <dbReference type="ChEBI" id="CHEBI:58359"/>
        <dbReference type="ChEBI" id="CHEBI:58475"/>
        <dbReference type="ChEBI" id="CHEBI:58525"/>
        <dbReference type="EC" id="4.3.2.10"/>
    </reaction>
</comment>
<comment type="pathway">
    <text evidence="1">Amino-acid biosynthesis; L-histidine biosynthesis; L-histidine from 5-phospho-alpha-D-ribose 1-diphosphate: step 5/9.</text>
</comment>
<comment type="subunit">
    <text evidence="1">Heterodimer of HisH and HisF.</text>
</comment>
<comment type="subcellular location">
    <subcellularLocation>
        <location evidence="1">Cytoplasm</location>
    </subcellularLocation>
</comment>
<comment type="similarity">
    <text evidence="1">Belongs to the HisA/HisF family.</text>
</comment>